<sequence length="134" mass="15095">MARVKRGVTAHAKHKKVLDQAAGFRGRRKNTIRTAKAAVDRSKQYAYRDRKNRKRSFRALWIQRINAAVREQGLTYGRFIDGLAKAGIEIDRKVLSDIAIHEPEAFAALVASAKKALEYLKNTSMPNAFEGAVR</sequence>
<proteinExistence type="inferred from homology"/>
<evidence type="ECO:0000255" key="1">
    <source>
        <dbReference type="HAMAP-Rule" id="MF_00382"/>
    </source>
</evidence>
<evidence type="ECO:0000305" key="2"/>
<gene>
    <name evidence="1" type="primary">rplT</name>
    <name type="ordered locus">BOV_2035</name>
</gene>
<keyword id="KW-0687">Ribonucleoprotein</keyword>
<keyword id="KW-0689">Ribosomal protein</keyword>
<keyword id="KW-0694">RNA-binding</keyword>
<keyword id="KW-0699">rRNA-binding</keyword>
<organism>
    <name type="scientific">Brucella ovis (strain ATCC 25840 / 63/290 / NCTC 10512)</name>
    <dbReference type="NCBI Taxonomy" id="444178"/>
    <lineage>
        <taxon>Bacteria</taxon>
        <taxon>Pseudomonadati</taxon>
        <taxon>Pseudomonadota</taxon>
        <taxon>Alphaproteobacteria</taxon>
        <taxon>Hyphomicrobiales</taxon>
        <taxon>Brucellaceae</taxon>
        <taxon>Brucella/Ochrobactrum group</taxon>
        <taxon>Brucella</taxon>
    </lineage>
</organism>
<reference key="1">
    <citation type="journal article" date="2009" name="PLoS ONE">
        <title>Genome degradation in Brucella ovis corresponds with narrowing of its host range and tissue tropism.</title>
        <authorList>
            <person name="Tsolis R.M."/>
            <person name="Seshadri R."/>
            <person name="Santos R.L."/>
            <person name="Sangari F.J."/>
            <person name="Lobo J.M."/>
            <person name="de Jong M.F."/>
            <person name="Ren Q."/>
            <person name="Myers G."/>
            <person name="Brinkac L.M."/>
            <person name="Nelson W.C."/>
            <person name="Deboy R.T."/>
            <person name="Angiuoli S."/>
            <person name="Khouri H."/>
            <person name="Dimitrov G."/>
            <person name="Robinson J.R."/>
            <person name="Mulligan S."/>
            <person name="Walker R.L."/>
            <person name="Elzer P.E."/>
            <person name="Hassan K.A."/>
            <person name="Paulsen I.T."/>
        </authorList>
    </citation>
    <scope>NUCLEOTIDE SEQUENCE [LARGE SCALE GENOMIC DNA]</scope>
    <source>
        <strain>ATCC 25840 / 63/290 / NCTC 10512</strain>
    </source>
</reference>
<protein>
    <recommendedName>
        <fullName evidence="1">Large ribosomal subunit protein bL20</fullName>
    </recommendedName>
    <alternativeName>
        <fullName evidence="2">50S ribosomal protein L20</fullName>
    </alternativeName>
</protein>
<comment type="function">
    <text evidence="1">Binds directly to 23S ribosomal RNA and is necessary for the in vitro assembly process of the 50S ribosomal subunit. It is not involved in the protein synthesizing functions of that subunit.</text>
</comment>
<comment type="similarity">
    <text evidence="1">Belongs to the bacterial ribosomal protein bL20 family.</text>
</comment>
<name>RL20_BRUO2</name>
<feature type="chain" id="PRO_1000048934" description="Large ribosomal subunit protein bL20">
    <location>
        <begin position="1"/>
        <end position="134"/>
    </location>
</feature>
<dbReference type="EMBL" id="CP000708">
    <property type="protein sequence ID" value="ABQ60754.1"/>
    <property type="molecule type" value="Genomic_DNA"/>
</dbReference>
<dbReference type="RefSeq" id="WP_002965185.1">
    <property type="nucleotide sequence ID" value="NC_009505.1"/>
</dbReference>
<dbReference type="SMR" id="A5VT72"/>
<dbReference type="GeneID" id="97534622"/>
<dbReference type="KEGG" id="bov:BOV_2035"/>
<dbReference type="HOGENOM" id="CLU_123265_0_1_5"/>
<dbReference type="PhylomeDB" id="A5VT72"/>
<dbReference type="Proteomes" id="UP000006383">
    <property type="component" value="Chromosome I"/>
</dbReference>
<dbReference type="GO" id="GO:1990904">
    <property type="term" value="C:ribonucleoprotein complex"/>
    <property type="evidence" value="ECO:0007669"/>
    <property type="project" value="UniProtKB-KW"/>
</dbReference>
<dbReference type="GO" id="GO:0005840">
    <property type="term" value="C:ribosome"/>
    <property type="evidence" value="ECO:0007669"/>
    <property type="project" value="UniProtKB-KW"/>
</dbReference>
<dbReference type="GO" id="GO:0019843">
    <property type="term" value="F:rRNA binding"/>
    <property type="evidence" value="ECO:0007669"/>
    <property type="project" value="UniProtKB-UniRule"/>
</dbReference>
<dbReference type="GO" id="GO:0003735">
    <property type="term" value="F:structural constituent of ribosome"/>
    <property type="evidence" value="ECO:0007669"/>
    <property type="project" value="InterPro"/>
</dbReference>
<dbReference type="GO" id="GO:0000027">
    <property type="term" value="P:ribosomal large subunit assembly"/>
    <property type="evidence" value="ECO:0007669"/>
    <property type="project" value="UniProtKB-UniRule"/>
</dbReference>
<dbReference type="GO" id="GO:0006412">
    <property type="term" value="P:translation"/>
    <property type="evidence" value="ECO:0007669"/>
    <property type="project" value="InterPro"/>
</dbReference>
<dbReference type="CDD" id="cd07026">
    <property type="entry name" value="Ribosomal_L20"/>
    <property type="match status" value="1"/>
</dbReference>
<dbReference type="FunFam" id="1.10.1900.20:FF:000001">
    <property type="entry name" value="50S ribosomal protein L20"/>
    <property type="match status" value="1"/>
</dbReference>
<dbReference type="Gene3D" id="6.10.160.10">
    <property type="match status" value="1"/>
</dbReference>
<dbReference type="Gene3D" id="1.10.1900.20">
    <property type="entry name" value="Ribosomal protein L20"/>
    <property type="match status" value="1"/>
</dbReference>
<dbReference type="HAMAP" id="MF_00382">
    <property type="entry name" value="Ribosomal_bL20"/>
    <property type="match status" value="1"/>
</dbReference>
<dbReference type="InterPro" id="IPR005813">
    <property type="entry name" value="Ribosomal_bL20"/>
</dbReference>
<dbReference type="InterPro" id="IPR049946">
    <property type="entry name" value="RIBOSOMAL_L20_CS"/>
</dbReference>
<dbReference type="InterPro" id="IPR035566">
    <property type="entry name" value="Ribosomal_protein_bL20_C"/>
</dbReference>
<dbReference type="NCBIfam" id="TIGR01032">
    <property type="entry name" value="rplT_bact"/>
    <property type="match status" value="1"/>
</dbReference>
<dbReference type="PANTHER" id="PTHR10986">
    <property type="entry name" value="39S RIBOSOMAL PROTEIN L20"/>
    <property type="match status" value="1"/>
</dbReference>
<dbReference type="Pfam" id="PF00453">
    <property type="entry name" value="Ribosomal_L20"/>
    <property type="match status" value="1"/>
</dbReference>
<dbReference type="PRINTS" id="PR00062">
    <property type="entry name" value="RIBOSOMALL20"/>
</dbReference>
<dbReference type="SUPFAM" id="SSF74731">
    <property type="entry name" value="Ribosomal protein L20"/>
    <property type="match status" value="1"/>
</dbReference>
<dbReference type="PROSITE" id="PS00937">
    <property type="entry name" value="RIBOSOMAL_L20"/>
    <property type="match status" value="1"/>
</dbReference>
<accession>A5VT72</accession>